<organism>
    <name type="scientific">Pestalotiopsis fici (strain W106-1 / CGMCC3.15140)</name>
    <dbReference type="NCBI Taxonomy" id="1229662"/>
    <lineage>
        <taxon>Eukaryota</taxon>
        <taxon>Fungi</taxon>
        <taxon>Dikarya</taxon>
        <taxon>Ascomycota</taxon>
        <taxon>Pezizomycotina</taxon>
        <taxon>Sordariomycetes</taxon>
        <taxon>Xylariomycetidae</taxon>
        <taxon>Amphisphaeriales</taxon>
        <taxon>Sporocadaceae</taxon>
        <taxon>Pestalotiopsis</taxon>
    </lineage>
</organism>
<gene>
    <name evidence="4" type="primary">iacJ</name>
    <name type="ORF">PFICI_04047</name>
</gene>
<proteinExistence type="evidence at protein level"/>
<sequence length="324" mass="35088">MSSLYTLWQQFYPPAPTFTEKDVGAGSQVGKVFIITGANSGIGYALVKLLYPTGATIYVAGRSPQKIQTAINEITSVSPSPSTPATLKPLHLDLDDLTSIKAAAAAFAAQESRLDIIWNNAGGGYPVGSVSKQGIEAHMGSHCVAPLLFTNELLPLLRAAARTAPKDSVRVVWTGSAQIQLNAPQGGVDFARVEKPTTHDMQDYGAAKAGNWFLAVEGARRWGKDGIVSVCQNPGNLSTPIYDIFGWFMLALIRGLFLYDAKYGAYTMLFSGFSPEVNKGTNGAYIWPFGRIKPPPRADVLQAGSEGKAKEFWEWCERSWKKHV</sequence>
<comment type="function">
    <text evidence="3 6">Short-chain dehydrogenase/reductase; part of the gene cluster that mediates the biosynthesis of iso-A82775C, a enylepoxycyclohexane and biosynthetic precursor of the chloropestolide anticancer natural products (PubMed:29384350). Within the cluster, the prenyltransferase iacE prenylates siccayne to generate pestalodiol E, using dimethylallyl diphosphate (DMAPP) as cosubstrate (PubMed:29384350). The probable oxidoreductase iacF is then involved in the epoxidation of pestalodiol F to pestalodiol F, which is further converted to pestalofone A by the short-chain dehydrogenase/reductase iacG (PubMed:29384350). Iso-A82775C is subsequently generated from pestalofone A by the short-chain dehydrogenase/reductase iacC (PubMed:29384350). Iso-A82775C is further condensed with maldoxin via a Diels-Alder reaction to produce the anticancer natural products chloropestolides A to E (Probable).</text>
</comment>
<comment type="pathway">
    <text evidence="6">Secondary metabolite biosynthesis.</text>
</comment>
<comment type="induction">
    <text evidence="3">Expression is co-regulated with the other genes from the iso-A82775C biosynthesis cluster and probably controlled by the cluster-specific transcription factors iacI and iacK.</text>
</comment>
<comment type="disruption phenotype">
    <text evidence="3">Reduces slightly the production of iso-A82775C.</text>
</comment>
<comment type="biotechnology">
    <text evidence="3">Iso-A82775C is a precursor for the biosynthesis of the anticancer natural products chloropestolides A to E via a Diesls-Alder reaction with maldoxin (PubMed:29384350). In the absence of the prenyltransferase iacE, siccayne accumulates instead of iso-A82775C and can also be condensed with maldoxin to produce chloropestolides H to K, which show also antibacterial and anticancer properties (PubMed:29384350).</text>
</comment>
<comment type="similarity">
    <text evidence="5">Belongs to the short-chain dehydrogenases/reductases (SDR) family.</text>
</comment>
<evidence type="ECO:0000250" key="1">
    <source>
        <dbReference type="UniProtKB" id="L0E2Z4"/>
    </source>
</evidence>
<evidence type="ECO:0000250" key="2">
    <source>
        <dbReference type="UniProtKB" id="O93868"/>
    </source>
</evidence>
<evidence type="ECO:0000269" key="3">
    <source>
    </source>
</evidence>
<evidence type="ECO:0000303" key="4">
    <source>
    </source>
</evidence>
<evidence type="ECO:0000305" key="5"/>
<evidence type="ECO:0000305" key="6">
    <source>
    </source>
</evidence>
<feature type="chain" id="PRO_0000451380" description="Short-chain dehydrogenase/reductase iacJ">
    <location>
        <begin position="1"/>
        <end position="324"/>
    </location>
</feature>
<feature type="active site" description="Proton donor" evidence="2">
    <location>
        <position position="204"/>
    </location>
</feature>
<feature type="active site" description="Lowers pKa of active site Tyr" evidence="2">
    <location>
        <position position="208"/>
    </location>
</feature>
<feature type="binding site" evidence="1">
    <location>
        <position position="42"/>
    </location>
    <ligand>
        <name>NADP(+)</name>
        <dbReference type="ChEBI" id="CHEBI:58349"/>
    </ligand>
</feature>
<feature type="binding site" evidence="1">
    <location>
        <position position="66"/>
    </location>
    <ligand>
        <name>NADP(+)</name>
        <dbReference type="ChEBI" id="CHEBI:58349"/>
    </ligand>
</feature>
<feature type="binding site" evidence="1">
    <location>
        <position position="93"/>
    </location>
    <ligand>
        <name>NADP(+)</name>
        <dbReference type="ChEBI" id="CHEBI:58349"/>
    </ligand>
</feature>
<feature type="binding site" evidence="2">
    <location>
        <position position="120"/>
    </location>
    <ligand>
        <name>NADP(+)</name>
        <dbReference type="ChEBI" id="CHEBI:58349"/>
    </ligand>
</feature>
<feature type="binding site" evidence="2">
    <location>
        <position position="204"/>
    </location>
    <ligand>
        <name>NADP(+)</name>
        <dbReference type="ChEBI" id="CHEBI:58349"/>
    </ligand>
</feature>
<feature type="binding site" evidence="2">
    <location>
        <position position="208"/>
    </location>
    <ligand>
        <name>NADP(+)</name>
        <dbReference type="ChEBI" id="CHEBI:58349"/>
    </ligand>
</feature>
<feature type="binding site" evidence="1">
    <location>
        <position position="239"/>
    </location>
    <ligand>
        <name>NADP(+)</name>
        <dbReference type="ChEBI" id="CHEBI:58349"/>
    </ligand>
</feature>
<reference key="1">
    <citation type="journal article" date="2018" name="ACS Chem. Biol.">
        <title>Characterization of a prenyltransferase for iso-A82775C biosynthesis and generation of new congeners of chloropestolides.</title>
        <authorList>
            <person name="Pan Y."/>
            <person name="Liu L."/>
            <person name="Guan F."/>
            <person name="Li E."/>
            <person name="Jin J."/>
            <person name="Li J."/>
            <person name="Che Y."/>
            <person name="Liu G."/>
        </authorList>
    </citation>
    <scope>NUCLEOTIDE SEQUENCE [GENOMIC DNA]</scope>
    <scope>FUNCTION</scope>
    <scope>DISRUPTION PHENOTYPE</scope>
    <scope>INDUCTION</scope>
    <scope>PATHWAY</scope>
    <scope>BIOTECHNOLOGY</scope>
    <source>
        <strain>W106-1 / CGMCC3.15140</strain>
    </source>
</reference>
<reference key="2">
    <citation type="journal article" date="2015" name="BMC Genomics">
        <title>Genomic and transcriptomic analysis of the endophytic fungus Pestalotiopsis fici reveals its lifestyle and high potential for synthesis of natural products.</title>
        <authorList>
            <person name="Wang X."/>
            <person name="Zhang X."/>
            <person name="Liu L."/>
            <person name="Xiang M."/>
            <person name="Wang W."/>
            <person name="Sun X."/>
            <person name="Che Y."/>
            <person name="Guo L."/>
            <person name="Liu G."/>
            <person name="Guo L."/>
            <person name="Wang C."/>
            <person name="Yin W.B."/>
            <person name="Stadler M."/>
            <person name="Zhang X."/>
            <person name="Liu X."/>
        </authorList>
    </citation>
    <scope>NUCLEOTIDE SEQUENCE [LARGE SCALE GENOMIC DNA]</scope>
    <source>
        <strain>W106-1 / CGMCC3.15140</strain>
    </source>
</reference>
<name>IACJ_PESFW</name>
<protein>
    <recommendedName>
        <fullName evidence="4">Short-chain dehydrogenase/reductase iacJ</fullName>
        <ecNumber evidence="6">1.1.1.-</ecNumber>
    </recommendedName>
    <alternativeName>
        <fullName evidence="4">Iso-A82775C biosynthesis cluster protein J</fullName>
    </alternativeName>
</protein>
<keyword id="KW-0521">NADP</keyword>
<keyword id="KW-0560">Oxidoreductase</keyword>
<keyword id="KW-1185">Reference proteome</keyword>
<accession>A0A1J0HSL5</accession>
<accession>W3XKM9</accession>
<dbReference type="EC" id="1.1.1.-" evidence="6"/>
<dbReference type="EMBL" id="KU963195">
    <property type="protein sequence ID" value="APC57601.1"/>
    <property type="molecule type" value="Genomic_DNA"/>
</dbReference>
<dbReference type="EMBL" id="KI912110">
    <property type="protein sequence ID" value="ETS86022.1"/>
    <property type="molecule type" value="Genomic_DNA"/>
</dbReference>
<dbReference type="RefSeq" id="XP_007830819.1">
    <property type="nucleotide sequence ID" value="XM_007832628.1"/>
</dbReference>
<dbReference type="SMR" id="A0A1J0HSL5"/>
<dbReference type="STRING" id="1229662.W3XKM9"/>
<dbReference type="GeneID" id="19269060"/>
<dbReference type="KEGG" id="pfy:PFICI_04047"/>
<dbReference type="eggNOG" id="KOG1208">
    <property type="taxonomic scope" value="Eukaryota"/>
</dbReference>
<dbReference type="HOGENOM" id="CLU_010194_44_6_1"/>
<dbReference type="InParanoid" id="A0A1J0HSL5"/>
<dbReference type="OMA" id="FAQQESK"/>
<dbReference type="OrthoDB" id="191139at2759"/>
<dbReference type="Proteomes" id="UP000030651">
    <property type="component" value="Unassembled WGS sequence"/>
</dbReference>
<dbReference type="GO" id="GO:0016491">
    <property type="term" value="F:oxidoreductase activity"/>
    <property type="evidence" value="ECO:0007669"/>
    <property type="project" value="UniProtKB-KW"/>
</dbReference>
<dbReference type="Gene3D" id="3.40.50.720">
    <property type="entry name" value="NAD(P)-binding Rossmann-like Domain"/>
    <property type="match status" value="1"/>
</dbReference>
<dbReference type="InterPro" id="IPR036291">
    <property type="entry name" value="NAD(P)-bd_dom_sf"/>
</dbReference>
<dbReference type="InterPro" id="IPR002347">
    <property type="entry name" value="SDR_fam"/>
</dbReference>
<dbReference type="PANTHER" id="PTHR24320">
    <property type="entry name" value="RETINOL DEHYDROGENASE"/>
    <property type="match status" value="1"/>
</dbReference>
<dbReference type="PANTHER" id="PTHR24320:SF236">
    <property type="entry name" value="SHORT-CHAIN DEHYDROGENASE-RELATED"/>
    <property type="match status" value="1"/>
</dbReference>
<dbReference type="Pfam" id="PF00106">
    <property type="entry name" value="adh_short"/>
    <property type="match status" value="1"/>
</dbReference>
<dbReference type="PRINTS" id="PR00081">
    <property type="entry name" value="GDHRDH"/>
</dbReference>
<dbReference type="SUPFAM" id="SSF51735">
    <property type="entry name" value="NAD(P)-binding Rossmann-fold domains"/>
    <property type="match status" value="1"/>
</dbReference>